<feature type="chain" id="PRO_1000205518" description="DNA-directed RNA polymerase subunit omega">
    <location>
        <begin position="1"/>
        <end position="69"/>
    </location>
</feature>
<evidence type="ECO:0000255" key="1">
    <source>
        <dbReference type="HAMAP-Rule" id="MF_00366"/>
    </source>
</evidence>
<proteinExistence type="inferred from homology"/>
<protein>
    <recommendedName>
        <fullName evidence="1">DNA-directed RNA polymerase subunit omega</fullName>
        <shortName evidence="1">RNAP omega subunit</shortName>
        <ecNumber evidence="1">2.7.7.6</ecNumber>
    </recommendedName>
    <alternativeName>
        <fullName evidence="1">RNA polymerase omega subunit</fullName>
    </alternativeName>
    <alternativeName>
        <fullName evidence="1">Transcriptase subunit omega</fullName>
    </alternativeName>
</protein>
<organism>
    <name type="scientific">Exiguobacterium sp. (strain ATCC BAA-1283 / AT1b)</name>
    <dbReference type="NCBI Taxonomy" id="360911"/>
    <lineage>
        <taxon>Bacteria</taxon>
        <taxon>Bacillati</taxon>
        <taxon>Bacillota</taxon>
        <taxon>Bacilli</taxon>
        <taxon>Bacillales</taxon>
        <taxon>Bacillales Family XII. Incertae Sedis</taxon>
        <taxon>Exiguobacterium</taxon>
    </lineage>
</organism>
<accession>C4L5X2</accession>
<sequence>MLYPSIDALQRTIPSKYTIVTVAAKRARQIQDGKAPKVAEPKSYKPVGQALEELFSGDTTIIVNEKNNG</sequence>
<gene>
    <name evidence="1" type="primary">rpoZ</name>
    <name type="ordered locus">EAT1b_2864</name>
</gene>
<name>RPOZ_EXISA</name>
<comment type="function">
    <text evidence="1">Promotes RNA polymerase assembly. Latches the N- and C-terminal regions of the beta' subunit thereby facilitating its interaction with the beta and alpha subunits.</text>
</comment>
<comment type="catalytic activity">
    <reaction evidence="1">
        <text>RNA(n) + a ribonucleoside 5'-triphosphate = RNA(n+1) + diphosphate</text>
        <dbReference type="Rhea" id="RHEA:21248"/>
        <dbReference type="Rhea" id="RHEA-COMP:14527"/>
        <dbReference type="Rhea" id="RHEA-COMP:17342"/>
        <dbReference type="ChEBI" id="CHEBI:33019"/>
        <dbReference type="ChEBI" id="CHEBI:61557"/>
        <dbReference type="ChEBI" id="CHEBI:140395"/>
        <dbReference type="EC" id="2.7.7.6"/>
    </reaction>
</comment>
<comment type="subunit">
    <text evidence="1">The RNAP catalytic core consists of 2 alpha, 1 beta, 1 beta' and 1 omega subunit. When a sigma factor is associated with the core the holoenzyme is formed, which can initiate transcription.</text>
</comment>
<comment type="similarity">
    <text evidence="1">Belongs to the RNA polymerase subunit omega family.</text>
</comment>
<dbReference type="EC" id="2.7.7.6" evidence="1"/>
<dbReference type="EMBL" id="CP001615">
    <property type="protein sequence ID" value="ACQ71778.1"/>
    <property type="molecule type" value="Genomic_DNA"/>
</dbReference>
<dbReference type="RefSeq" id="WP_015881337.1">
    <property type="nucleotide sequence ID" value="NZ_MOEL01000013.1"/>
</dbReference>
<dbReference type="SMR" id="C4L5X2"/>
<dbReference type="STRING" id="360911.EAT1b_2864"/>
<dbReference type="GeneID" id="94372472"/>
<dbReference type="KEGG" id="eat:EAT1b_2864"/>
<dbReference type="eggNOG" id="COG1758">
    <property type="taxonomic scope" value="Bacteria"/>
</dbReference>
<dbReference type="HOGENOM" id="CLU_125406_6_0_9"/>
<dbReference type="OrthoDB" id="9815459at2"/>
<dbReference type="Proteomes" id="UP000000716">
    <property type="component" value="Chromosome"/>
</dbReference>
<dbReference type="GO" id="GO:0000428">
    <property type="term" value="C:DNA-directed RNA polymerase complex"/>
    <property type="evidence" value="ECO:0007669"/>
    <property type="project" value="UniProtKB-KW"/>
</dbReference>
<dbReference type="GO" id="GO:0003677">
    <property type="term" value="F:DNA binding"/>
    <property type="evidence" value="ECO:0007669"/>
    <property type="project" value="UniProtKB-UniRule"/>
</dbReference>
<dbReference type="GO" id="GO:0003899">
    <property type="term" value="F:DNA-directed RNA polymerase activity"/>
    <property type="evidence" value="ECO:0007669"/>
    <property type="project" value="UniProtKB-UniRule"/>
</dbReference>
<dbReference type="GO" id="GO:0006351">
    <property type="term" value="P:DNA-templated transcription"/>
    <property type="evidence" value="ECO:0007669"/>
    <property type="project" value="UniProtKB-UniRule"/>
</dbReference>
<dbReference type="Gene3D" id="3.90.940.10">
    <property type="match status" value="1"/>
</dbReference>
<dbReference type="HAMAP" id="MF_00366">
    <property type="entry name" value="RNApol_bact_RpoZ"/>
    <property type="match status" value="1"/>
</dbReference>
<dbReference type="InterPro" id="IPR003716">
    <property type="entry name" value="DNA-dir_RNA_pol_omega"/>
</dbReference>
<dbReference type="InterPro" id="IPR006110">
    <property type="entry name" value="Pol_omega/Rpo6/RPB6"/>
</dbReference>
<dbReference type="InterPro" id="IPR036161">
    <property type="entry name" value="RPB6/omega-like_sf"/>
</dbReference>
<dbReference type="NCBIfam" id="TIGR00690">
    <property type="entry name" value="rpoZ"/>
    <property type="match status" value="1"/>
</dbReference>
<dbReference type="PANTHER" id="PTHR34476">
    <property type="entry name" value="DNA-DIRECTED RNA POLYMERASE SUBUNIT OMEGA"/>
    <property type="match status" value="1"/>
</dbReference>
<dbReference type="PANTHER" id="PTHR34476:SF1">
    <property type="entry name" value="DNA-DIRECTED RNA POLYMERASE SUBUNIT OMEGA"/>
    <property type="match status" value="1"/>
</dbReference>
<dbReference type="Pfam" id="PF01192">
    <property type="entry name" value="RNA_pol_Rpb6"/>
    <property type="match status" value="1"/>
</dbReference>
<dbReference type="SMART" id="SM01409">
    <property type="entry name" value="RNA_pol_Rpb6"/>
    <property type="match status" value="1"/>
</dbReference>
<dbReference type="SUPFAM" id="SSF63562">
    <property type="entry name" value="RPB6/omega subunit-like"/>
    <property type="match status" value="1"/>
</dbReference>
<reference key="1">
    <citation type="journal article" date="2011" name="J. Bacteriol.">
        <title>Complete genome sequence of the Thermophilic Bacterium Exiguobacterium sp. AT1b.</title>
        <authorList>
            <person name="Vishnivetskaya T.A."/>
            <person name="Lucas S."/>
            <person name="Copeland A."/>
            <person name="Lapidus A."/>
            <person name="Glavina del Rio T."/>
            <person name="Dalin E."/>
            <person name="Tice H."/>
            <person name="Bruce D.C."/>
            <person name="Goodwin L.A."/>
            <person name="Pitluck S."/>
            <person name="Saunders E."/>
            <person name="Brettin T."/>
            <person name="Detter C."/>
            <person name="Han C."/>
            <person name="Larimer F."/>
            <person name="Land M.L."/>
            <person name="Hauser L.J."/>
            <person name="Kyrpides N.C."/>
            <person name="Ovchinnikova G."/>
            <person name="Kathariou S."/>
            <person name="Ramaley R.F."/>
            <person name="Rodrigues D.F."/>
            <person name="Hendrix C."/>
            <person name="Richardson P."/>
            <person name="Tiedje J.M."/>
        </authorList>
    </citation>
    <scope>NUCLEOTIDE SEQUENCE [LARGE SCALE GENOMIC DNA]</scope>
    <source>
        <strain>ATCC BAA-1283 / AT1b</strain>
    </source>
</reference>
<keyword id="KW-0240">DNA-directed RNA polymerase</keyword>
<keyword id="KW-0548">Nucleotidyltransferase</keyword>
<keyword id="KW-0804">Transcription</keyword>
<keyword id="KW-0808">Transferase</keyword>